<dbReference type="EC" id="4.2.3.3" evidence="1"/>
<dbReference type="EMBL" id="CP001056">
    <property type="protein sequence ID" value="ACD23522.1"/>
    <property type="molecule type" value="Genomic_DNA"/>
</dbReference>
<dbReference type="SMR" id="B2TK64"/>
<dbReference type="KEGG" id="cbk:CLL_A0571"/>
<dbReference type="HOGENOM" id="CLU_120420_1_0_9"/>
<dbReference type="Proteomes" id="UP000001195">
    <property type="component" value="Chromosome"/>
</dbReference>
<dbReference type="GO" id="GO:0005829">
    <property type="term" value="C:cytosol"/>
    <property type="evidence" value="ECO:0007669"/>
    <property type="project" value="TreeGrafter"/>
</dbReference>
<dbReference type="GO" id="GO:0008929">
    <property type="term" value="F:methylglyoxal synthase activity"/>
    <property type="evidence" value="ECO:0007669"/>
    <property type="project" value="UniProtKB-UniRule"/>
</dbReference>
<dbReference type="GO" id="GO:0019242">
    <property type="term" value="P:methylglyoxal biosynthetic process"/>
    <property type="evidence" value="ECO:0007669"/>
    <property type="project" value="UniProtKB-UniRule"/>
</dbReference>
<dbReference type="CDD" id="cd01422">
    <property type="entry name" value="MGS"/>
    <property type="match status" value="1"/>
</dbReference>
<dbReference type="Gene3D" id="3.40.50.1380">
    <property type="entry name" value="Methylglyoxal synthase-like domain"/>
    <property type="match status" value="1"/>
</dbReference>
<dbReference type="HAMAP" id="MF_00549">
    <property type="entry name" value="Methylglyoxal_synth"/>
    <property type="match status" value="1"/>
</dbReference>
<dbReference type="InterPro" id="IPR004363">
    <property type="entry name" value="Methylgl_synth"/>
</dbReference>
<dbReference type="InterPro" id="IPR018148">
    <property type="entry name" value="Methylglyoxal_synth_AS"/>
</dbReference>
<dbReference type="InterPro" id="IPR011607">
    <property type="entry name" value="MGS-like_dom"/>
</dbReference>
<dbReference type="InterPro" id="IPR036914">
    <property type="entry name" value="MGS-like_dom_sf"/>
</dbReference>
<dbReference type="NCBIfam" id="TIGR00160">
    <property type="entry name" value="MGSA"/>
    <property type="match status" value="1"/>
</dbReference>
<dbReference type="NCBIfam" id="NF003559">
    <property type="entry name" value="PRK05234.1"/>
    <property type="match status" value="1"/>
</dbReference>
<dbReference type="PANTHER" id="PTHR30492">
    <property type="entry name" value="METHYLGLYOXAL SYNTHASE"/>
    <property type="match status" value="1"/>
</dbReference>
<dbReference type="PANTHER" id="PTHR30492:SF0">
    <property type="entry name" value="METHYLGLYOXAL SYNTHASE"/>
    <property type="match status" value="1"/>
</dbReference>
<dbReference type="Pfam" id="PF02142">
    <property type="entry name" value="MGS"/>
    <property type="match status" value="1"/>
</dbReference>
<dbReference type="PIRSF" id="PIRSF006614">
    <property type="entry name" value="Methylglyox_syn"/>
    <property type="match status" value="1"/>
</dbReference>
<dbReference type="SMART" id="SM00851">
    <property type="entry name" value="MGS"/>
    <property type="match status" value="1"/>
</dbReference>
<dbReference type="SUPFAM" id="SSF52335">
    <property type="entry name" value="Methylglyoxal synthase-like"/>
    <property type="match status" value="1"/>
</dbReference>
<dbReference type="PROSITE" id="PS01335">
    <property type="entry name" value="METHYLGLYOXAL_SYNTH"/>
    <property type="match status" value="1"/>
</dbReference>
<dbReference type="PROSITE" id="PS51855">
    <property type="entry name" value="MGS"/>
    <property type="match status" value="1"/>
</dbReference>
<protein>
    <recommendedName>
        <fullName evidence="1">Methylglyoxal synthase</fullName>
        <shortName evidence="1">MGS</shortName>
        <ecNumber evidence="1">4.2.3.3</ecNumber>
    </recommendedName>
</protein>
<gene>
    <name evidence="1" type="primary">mgsA</name>
    <name type="ordered locus">CLL_A0571</name>
</gene>
<accession>B2TK64</accession>
<organism>
    <name type="scientific">Clostridium botulinum (strain Eklund 17B / Type B)</name>
    <dbReference type="NCBI Taxonomy" id="935198"/>
    <lineage>
        <taxon>Bacteria</taxon>
        <taxon>Bacillati</taxon>
        <taxon>Bacillota</taxon>
        <taxon>Clostridia</taxon>
        <taxon>Eubacteriales</taxon>
        <taxon>Clostridiaceae</taxon>
        <taxon>Clostridium</taxon>
    </lineage>
</organism>
<keyword id="KW-0456">Lyase</keyword>
<reference key="1">
    <citation type="submission" date="2008-04" db="EMBL/GenBank/DDBJ databases">
        <title>Complete sequence of Clostridium botulinum strain Eklund.</title>
        <authorList>
            <person name="Brinkac L.M."/>
            <person name="Brown J.L."/>
            <person name="Bruce D."/>
            <person name="Detter C."/>
            <person name="Munk C."/>
            <person name="Smith L.A."/>
            <person name="Smith T.J."/>
            <person name="Sutton G."/>
            <person name="Brettin T.S."/>
        </authorList>
    </citation>
    <scope>NUCLEOTIDE SEQUENCE [LARGE SCALE GENOMIC DNA]</scope>
    <source>
        <strain>Eklund 17B / Type B</strain>
    </source>
</reference>
<proteinExistence type="inferred from homology"/>
<sequence>MRIALIAHDKKKQEIIEFAKRNKEALEKYELLATGTTGKMISEETGLNIKRYLSGPYGGDQQIGGRIAEGTIGLVVFFRDPLTAQPHEPDVSALLRVCDVHNIPVVTNSGTADLIIKQF</sequence>
<evidence type="ECO:0000255" key="1">
    <source>
        <dbReference type="HAMAP-Rule" id="MF_00549"/>
    </source>
</evidence>
<name>MGSA_CLOBB</name>
<comment type="function">
    <text evidence="1">Catalyzes the formation of methylglyoxal from dihydroxyacetone phosphate.</text>
</comment>
<comment type="catalytic activity">
    <reaction evidence="1">
        <text>dihydroxyacetone phosphate = methylglyoxal + phosphate</text>
        <dbReference type="Rhea" id="RHEA:17937"/>
        <dbReference type="ChEBI" id="CHEBI:17158"/>
        <dbReference type="ChEBI" id="CHEBI:43474"/>
        <dbReference type="ChEBI" id="CHEBI:57642"/>
        <dbReference type="EC" id="4.2.3.3"/>
    </reaction>
</comment>
<comment type="similarity">
    <text evidence="1">Belongs to the methylglyoxal synthase family.</text>
</comment>
<feature type="chain" id="PRO_1000211979" description="Methylglyoxal synthase">
    <location>
        <begin position="1"/>
        <end position="119"/>
    </location>
</feature>
<feature type="domain" description="MGS-like" evidence="1">
    <location>
        <begin position="1"/>
        <end position="119"/>
    </location>
</feature>
<feature type="active site" description="Proton donor/acceptor" evidence="1">
    <location>
        <position position="60"/>
    </location>
</feature>
<feature type="binding site" evidence="1">
    <location>
        <position position="8"/>
    </location>
    <ligand>
        <name>substrate</name>
    </ligand>
</feature>
<feature type="binding site" evidence="1">
    <location>
        <position position="12"/>
    </location>
    <ligand>
        <name>substrate</name>
    </ligand>
</feature>
<feature type="binding site" evidence="1">
    <location>
        <begin position="34"/>
        <end position="37"/>
    </location>
    <ligand>
        <name>substrate</name>
    </ligand>
</feature>
<feature type="binding site" evidence="1">
    <location>
        <begin position="54"/>
        <end position="55"/>
    </location>
    <ligand>
        <name>substrate</name>
    </ligand>
</feature>
<feature type="binding site" evidence="1">
    <location>
        <position position="87"/>
    </location>
    <ligand>
        <name>substrate</name>
    </ligand>
</feature>